<comment type="function">
    <text evidence="1">This protein is one of the early assembly proteins of the 50S ribosomal subunit, although it is not seen to bind rRNA by itself. It is important during the early stages of 50S assembly.</text>
</comment>
<comment type="subunit">
    <text evidence="1">Part of the 50S ribosomal subunit.</text>
</comment>
<comment type="similarity">
    <text evidence="1">Belongs to the universal ribosomal protein uL13 family.</text>
</comment>
<proteinExistence type="inferred from homology"/>
<sequence length="142" mass="16014">MKTFVAKPHEVQRDWFVIDAKGKVLGRVASEVARRLRGKHKPEFTPHVDTGDYIVIINAAEIVVTGNKAQDKKYFRHTTYPGGIRETNFEKLQQRFPGRAIQKAVKGMLPKGPLGYAMIKKLKVYAGAEHPHTAQQPKPLDI</sequence>
<feature type="chain" id="PRO_1000144096" description="Large ribosomal subunit protein uL13">
    <location>
        <begin position="1"/>
        <end position="142"/>
    </location>
</feature>
<organism>
    <name type="scientific">Bordetella petrii (strain ATCC BAA-461 / DSM 12804 / CCUG 43448)</name>
    <dbReference type="NCBI Taxonomy" id="340100"/>
    <lineage>
        <taxon>Bacteria</taxon>
        <taxon>Pseudomonadati</taxon>
        <taxon>Pseudomonadota</taxon>
        <taxon>Betaproteobacteria</taxon>
        <taxon>Burkholderiales</taxon>
        <taxon>Alcaligenaceae</taxon>
        <taxon>Bordetella</taxon>
    </lineage>
</organism>
<reference key="1">
    <citation type="journal article" date="2008" name="BMC Genomics">
        <title>The missing link: Bordetella petrii is endowed with both the metabolic versatility of environmental bacteria and virulence traits of pathogenic Bordetellae.</title>
        <authorList>
            <person name="Gross R."/>
            <person name="Guzman C.A."/>
            <person name="Sebaihia M."/>
            <person name="Martin dos Santos V.A.P."/>
            <person name="Pieper D.H."/>
            <person name="Koebnik R."/>
            <person name="Lechner M."/>
            <person name="Bartels D."/>
            <person name="Buhrmester J."/>
            <person name="Choudhuri J.V."/>
            <person name="Ebensen T."/>
            <person name="Gaigalat L."/>
            <person name="Herrmann S."/>
            <person name="Khachane A.N."/>
            <person name="Larisch C."/>
            <person name="Link S."/>
            <person name="Linke B."/>
            <person name="Meyer F."/>
            <person name="Mormann S."/>
            <person name="Nakunst D."/>
            <person name="Rueckert C."/>
            <person name="Schneiker-Bekel S."/>
            <person name="Schulze K."/>
            <person name="Voerholter F.-J."/>
            <person name="Yevsa T."/>
            <person name="Engle J.T."/>
            <person name="Goldman W.E."/>
            <person name="Puehler A."/>
            <person name="Goebel U.B."/>
            <person name="Goesmann A."/>
            <person name="Bloecker H."/>
            <person name="Kaiser O."/>
            <person name="Martinez-Arias R."/>
        </authorList>
    </citation>
    <scope>NUCLEOTIDE SEQUENCE [LARGE SCALE GENOMIC DNA]</scope>
    <source>
        <strain>ATCC BAA-461 / DSM 12804 / CCUG 43448</strain>
    </source>
</reference>
<protein>
    <recommendedName>
        <fullName evidence="1">Large ribosomal subunit protein uL13</fullName>
    </recommendedName>
    <alternativeName>
        <fullName evidence="2">50S ribosomal protein L13</fullName>
    </alternativeName>
</protein>
<dbReference type="EMBL" id="AM902716">
    <property type="protein sequence ID" value="CAP40925.1"/>
    <property type="molecule type" value="Genomic_DNA"/>
</dbReference>
<dbReference type="SMR" id="A9I237"/>
<dbReference type="STRING" id="94624.Bpet0593"/>
<dbReference type="KEGG" id="bpt:Bpet0593"/>
<dbReference type="eggNOG" id="COG0102">
    <property type="taxonomic scope" value="Bacteria"/>
</dbReference>
<dbReference type="Proteomes" id="UP000001225">
    <property type="component" value="Chromosome"/>
</dbReference>
<dbReference type="GO" id="GO:0022625">
    <property type="term" value="C:cytosolic large ribosomal subunit"/>
    <property type="evidence" value="ECO:0007669"/>
    <property type="project" value="TreeGrafter"/>
</dbReference>
<dbReference type="GO" id="GO:0003729">
    <property type="term" value="F:mRNA binding"/>
    <property type="evidence" value="ECO:0007669"/>
    <property type="project" value="TreeGrafter"/>
</dbReference>
<dbReference type="GO" id="GO:0003735">
    <property type="term" value="F:structural constituent of ribosome"/>
    <property type="evidence" value="ECO:0007669"/>
    <property type="project" value="InterPro"/>
</dbReference>
<dbReference type="GO" id="GO:0017148">
    <property type="term" value="P:negative regulation of translation"/>
    <property type="evidence" value="ECO:0007669"/>
    <property type="project" value="TreeGrafter"/>
</dbReference>
<dbReference type="GO" id="GO:0006412">
    <property type="term" value="P:translation"/>
    <property type="evidence" value="ECO:0007669"/>
    <property type="project" value="UniProtKB-UniRule"/>
</dbReference>
<dbReference type="CDD" id="cd00392">
    <property type="entry name" value="Ribosomal_L13"/>
    <property type="match status" value="1"/>
</dbReference>
<dbReference type="FunFam" id="3.90.1180.10:FF:000001">
    <property type="entry name" value="50S ribosomal protein L13"/>
    <property type="match status" value="1"/>
</dbReference>
<dbReference type="Gene3D" id="3.90.1180.10">
    <property type="entry name" value="Ribosomal protein L13"/>
    <property type="match status" value="1"/>
</dbReference>
<dbReference type="HAMAP" id="MF_01366">
    <property type="entry name" value="Ribosomal_uL13"/>
    <property type="match status" value="1"/>
</dbReference>
<dbReference type="InterPro" id="IPR005822">
    <property type="entry name" value="Ribosomal_uL13"/>
</dbReference>
<dbReference type="InterPro" id="IPR005823">
    <property type="entry name" value="Ribosomal_uL13_bac-type"/>
</dbReference>
<dbReference type="InterPro" id="IPR036899">
    <property type="entry name" value="Ribosomal_uL13_sf"/>
</dbReference>
<dbReference type="NCBIfam" id="TIGR01066">
    <property type="entry name" value="rplM_bact"/>
    <property type="match status" value="1"/>
</dbReference>
<dbReference type="PANTHER" id="PTHR11545:SF2">
    <property type="entry name" value="LARGE RIBOSOMAL SUBUNIT PROTEIN UL13M"/>
    <property type="match status" value="1"/>
</dbReference>
<dbReference type="PANTHER" id="PTHR11545">
    <property type="entry name" value="RIBOSOMAL PROTEIN L13"/>
    <property type="match status" value="1"/>
</dbReference>
<dbReference type="Pfam" id="PF00572">
    <property type="entry name" value="Ribosomal_L13"/>
    <property type="match status" value="1"/>
</dbReference>
<dbReference type="PIRSF" id="PIRSF002181">
    <property type="entry name" value="Ribosomal_L13"/>
    <property type="match status" value="1"/>
</dbReference>
<dbReference type="SUPFAM" id="SSF52161">
    <property type="entry name" value="Ribosomal protein L13"/>
    <property type="match status" value="1"/>
</dbReference>
<keyword id="KW-0687">Ribonucleoprotein</keyword>
<keyword id="KW-0689">Ribosomal protein</keyword>
<gene>
    <name evidence="1" type="primary">rplM</name>
    <name type="ordered locus">Bpet0593</name>
</gene>
<accession>A9I237</accession>
<evidence type="ECO:0000255" key="1">
    <source>
        <dbReference type="HAMAP-Rule" id="MF_01366"/>
    </source>
</evidence>
<evidence type="ECO:0000305" key="2"/>
<name>RL13_BORPD</name>